<organism>
    <name type="scientific">Methanopyrus kandleri (strain AV19 / DSM 6324 / JCM 9639 / NBRC 100938)</name>
    <dbReference type="NCBI Taxonomy" id="190192"/>
    <lineage>
        <taxon>Archaea</taxon>
        <taxon>Methanobacteriati</taxon>
        <taxon>Methanobacteriota</taxon>
        <taxon>Methanomada group</taxon>
        <taxon>Methanopyri</taxon>
        <taxon>Methanopyrales</taxon>
        <taxon>Methanopyraceae</taxon>
        <taxon>Methanopyrus</taxon>
    </lineage>
</organism>
<proteinExistence type="inferred from homology"/>
<reference key="1">
    <citation type="journal article" date="2002" name="Proc. Natl. Acad. Sci. U.S.A.">
        <title>The complete genome of hyperthermophile Methanopyrus kandleri AV19 and monophyly of archaeal methanogens.</title>
        <authorList>
            <person name="Slesarev A.I."/>
            <person name="Mezhevaya K.V."/>
            <person name="Makarova K.S."/>
            <person name="Polushin N.N."/>
            <person name="Shcherbinina O.V."/>
            <person name="Shakhova V.V."/>
            <person name="Belova G.I."/>
            <person name="Aravind L."/>
            <person name="Natale D.A."/>
            <person name="Rogozin I.B."/>
            <person name="Tatusov R.L."/>
            <person name="Wolf Y.I."/>
            <person name="Stetter K.O."/>
            <person name="Malykh A.G."/>
            <person name="Koonin E.V."/>
            <person name="Kozyavkin S.A."/>
        </authorList>
    </citation>
    <scope>NUCLEOTIDE SEQUENCE [LARGE SCALE GENOMIC DNA]</scope>
    <source>
        <strain>AV19 / DSM 6324 / JCM 9639 / NBRC 100938</strain>
    </source>
</reference>
<evidence type="ECO:0000255" key="1">
    <source>
        <dbReference type="HAMAP-Rule" id="MF_01331"/>
    </source>
</evidence>
<evidence type="ECO:0000305" key="2"/>
<sequence>MPKTKHWHYSIPPEELDDERTAKAFIRELRISPKHAREICRAIRGMPLDRAKEFLRRVIRKEEAVPFRKHKKKVPHRRQIRPGWDAGRFPEKAAREILRVLEHAEANAEYKGLDTDRLYIKHIAAHKGRVIRGWIPRAFGRATPFNTPTTHIEVILEER</sequence>
<dbReference type="EMBL" id="AE009439">
    <property type="protein sequence ID" value="AAM02054.1"/>
    <property type="molecule type" value="Genomic_DNA"/>
</dbReference>
<dbReference type="SMR" id="Q8TX36"/>
<dbReference type="FunCoup" id="Q8TX36">
    <property type="interactions" value="169"/>
</dbReference>
<dbReference type="STRING" id="190192.MK0841"/>
<dbReference type="PaxDb" id="190192-MK0841"/>
<dbReference type="EnsemblBacteria" id="AAM02054">
    <property type="protein sequence ID" value="AAM02054"/>
    <property type="gene ID" value="MK0841"/>
</dbReference>
<dbReference type="KEGG" id="mka:MK0841"/>
<dbReference type="PATRIC" id="fig|190192.8.peg.884"/>
<dbReference type="HOGENOM" id="CLU_083987_0_2_2"/>
<dbReference type="InParanoid" id="Q8TX36"/>
<dbReference type="OrthoDB" id="314984at2157"/>
<dbReference type="Proteomes" id="UP000001826">
    <property type="component" value="Chromosome"/>
</dbReference>
<dbReference type="GO" id="GO:0022625">
    <property type="term" value="C:cytosolic large ribosomal subunit"/>
    <property type="evidence" value="ECO:0007669"/>
    <property type="project" value="TreeGrafter"/>
</dbReference>
<dbReference type="GO" id="GO:0019843">
    <property type="term" value="F:rRNA binding"/>
    <property type="evidence" value="ECO:0007669"/>
    <property type="project" value="UniProtKB-UniRule"/>
</dbReference>
<dbReference type="GO" id="GO:0003735">
    <property type="term" value="F:structural constituent of ribosome"/>
    <property type="evidence" value="ECO:0007669"/>
    <property type="project" value="InterPro"/>
</dbReference>
<dbReference type="GO" id="GO:0002181">
    <property type="term" value="P:cytoplasmic translation"/>
    <property type="evidence" value="ECO:0007669"/>
    <property type="project" value="TreeGrafter"/>
</dbReference>
<dbReference type="CDD" id="cd00336">
    <property type="entry name" value="Ribosomal_L22"/>
    <property type="match status" value="1"/>
</dbReference>
<dbReference type="FunFam" id="3.90.470.10:FF:000015">
    <property type="entry name" value="50S ribosomal protein L22"/>
    <property type="match status" value="1"/>
</dbReference>
<dbReference type="Gene3D" id="3.90.470.10">
    <property type="entry name" value="Ribosomal protein L22/L17"/>
    <property type="match status" value="1"/>
</dbReference>
<dbReference type="HAMAP" id="MF_01331_A">
    <property type="entry name" value="Ribosomal_uL22_A"/>
    <property type="match status" value="1"/>
</dbReference>
<dbReference type="InterPro" id="IPR001063">
    <property type="entry name" value="Ribosomal_uL22"/>
</dbReference>
<dbReference type="InterPro" id="IPR018260">
    <property type="entry name" value="Ribosomal_uL22_CS"/>
</dbReference>
<dbReference type="InterPro" id="IPR005721">
    <property type="entry name" value="Ribosomal_uL22_euk/arc"/>
</dbReference>
<dbReference type="InterPro" id="IPR036394">
    <property type="entry name" value="Ribosomal_uL22_sf"/>
</dbReference>
<dbReference type="NCBIfam" id="NF003260">
    <property type="entry name" value="PRK04223.1"/>
    <property type="match status" value="1"/>
</dbReference>
<dbReference type="NCBIfam" id="TIGR01038">
    <property type="entry name" value="uL22_arch_euk"/>
    <property type="match status" value="1"/>
</dbReference>
<dbReference type="PANTHER" id="PTHR11593">
    <property type="entry name" value="60S RIBOSOMAL PROTEIN L17"/>
    <property type="match status" value="1"/>
</dbReference>
<dbReference type="PANTHER" id="PTHR11593:SF10">
    <property type="entry name" value="60S RIBOSOMAL PROTEIN L17"/>
    <property type="match status" value="1"/>
</dbReference>
<dbReference type="Pfam" id="PF00237">
    <property type="entry name" value="Ribosomal_L22"/>
    <property type="match status" value="1"/>
</dbReference>
<dbReference type="SUPFAM" id="SSF54843">
    <property type="entry name" value="Ribosomal protein L22"/>
    <property type="match status" value="1"/>
</dbReference>
<dbReference type="PROSITE" id="PS00464">
    <property type="entry name" value="RIBOSOMAL_L22"/>
    <property type="match status" value="1"/>
</dbReference>
<keyword id="KW-1185">Reference proteome</keyword>
<keyword id="KW-0687">Ribonucleoprotein</keyword>
<keyword id="KW-0689">Ribosomal protein</keyword>
<keyword id="KW-0694">RNA-binding</keyword>
<keyword id="KW-0699">rRNA-binding</keyword>
<accession>Q8TX36</accession>
<protein>
    <recommendedName>
        <fullName evidence="1">Large ribosomal subunit protein uL22</fullName>
    </recommendedName>
    <alternativeName>
        <fullName evidence="2">50S ribosomal protein L22</fullName>
    </alternativeName>
</protein>
<feature type="chain" id="PRO_0000125276" description="Large ribosomal subunit protein uL22">
    <location>
        <begin position="1"/>
        <end position="159"/>
    </location>
</feature>
<comment type="function">
    <text evidence="1">This protein binds specifically to 23S rRNA. It makes multiple contacts with different domains of the 23S rRNA in the assembled 50S subunit and ribosome.</text>
</comment>
<comment type="function">
    <text evidence="1">The globular domain of the protein is located near the polypeptide exit tunnel on the outside of the subunit, while an extended beta-hairpin is found that lines the wall of the exit tunnel in the center of the 70S ribosome.</text>
</comment>
<comment type="subunit">
    <text evidence="1">Part of the 50S ribosomal subunit.</text>
</comment>
<comment type="similarity">
    <text evidence="1">Belongs to the universal ribosomal protein uL22 family.</text>
</comment>
<gene>
    <name evidence="1" type="primary">rpl22</name>
    <name type="synonym">rplV</name>
    <name type="ordered locus">MK0841</name>
</gene>
<name>RL22_METKA</name>